<name>RDGC_SALTY</name>
<organism>
    <name type="scientific">Salmonella typhimurium (strain LT2 / SGSC1412 / ATCC 700720)</name>
    <dbReference type="NCBI Taxonomy" id="99287"/>
    <lineage>
        <taxon>Bacteria</taxon>
        <taxon>Pseudomonadati</taxon>
        <taxon>Pseudomonadota</taxon>
        <taxon>Gammaproteobacteria</taxon>
        <taxon>Enterobacterales</taxon>
        <taxon>Enterobacteriaceae</taxon>
        <taxon>Salmonella</taxon>
    </lineage>
</organism>
<evidence type="ECO:0000255" key="1">
    <source>
        <dbReference type="HAMAP-Rule" id="MF_00194"/>
    </source>
</evidence>
<comment type="function">
    <text evidence="1">May be involved in recombination.</text>
</comment>
<comment type="subcellular location">
    <subcellularLocation>
        <location evidence="1">Cytoplasm</location>
        <location evidence="1">Nucleoid</location>
    </subcellularLocation>
</comment>
<comment type="similarity">
    <text evidence="1">Belongs to the RdgC family.</text>
</comment>
<keyword id="KW-0963">Cytoplasm</keyword>
<keyword id="KW-0233">DNA recombination</keyword>
<keyword id="KW-1185">Reference proteome</keyword>
<protein>
    <recommendedName>
        <fullName evidence="1">Recombination-associated protein RdgC</fullName>
    </recommendedName>
</protein>
<gene>
    <name evidence="1" type="primary">rdgC</name>
    <name type="ordered locus">STM0392</name>
</gene>
<proteinExistence type="inferred from homology"/>
<dbReference type="EMBL" id="AE006468">
    <property type="protein sequence ID" value="AAL19346.1"/>
    <property type="molecule type" value="Genomic_DNA"/>
</dbReference>
<dbReference type="RefSeq" id="NP_459387.1">
    <property type="nucleotide sequence ID" value="NC_003197.2"/>
</dbReference>
<dbReference type="RefSeq" id="WP_000964305.1">
    <property type="nucleotide sequence ID" value="NC_003197.2"/>
</dbReference>
<dbReference type="SMR" id="P65973"/>
<dbReference type="STRING" id="99287.STM0392"/>
<dbReference type="PaxDb" id="99287-STM0392"/>
<dbReference type="DNASU" id="1251911"/>
<dbReference type="GeneID" id="1251911"/>
<dbReference type="KEGG" id="stm:STM0392"/>
<dbReference type="PATRIC" id="fig|99287.12.peg.417"/>
<dbReference type="HOGENOM" id="CLU_052038_1_1_6"/>
<dbReference type="OMA" id="TGWVPPM"/>
<dbReference type="PhylomeDB" id="P65973"/>
<dbReference type="BioCyc" id="SENT99287:STM0392-MONOMER"/>
<dbReference type="Proteomes" id="UP000001014">
    <property type="component" value="Chromosome"/>
</dbReference>
<dbReference type="GO" id="GO:0043590">
    <property type="term" value="C:bacterial nucleoid"/>
    <property type="evidence" value="ECO:0000318"/>
    <property type="project" value="GO_Central"/>
</dbReference>
<dbReference type="GO" id="GO:0005737">
    <property type="term" value="C:cytoplasm"/>
    <property type="evidence" value="ECO:0007669"/>
    <property type="project" value="UniProtKB-UniRule"/>
</dbReference>
<dbReference type="GO" id="GO:0003690">
    <property type="term" value="F:double-stranded DNA binding"/>
    <property type="evidence" value="ECO:0000318"/>
    <property type="project" value="GO_Central"/>
</dbReference>
<dbReference type="GO" id="GO:0006310">
    <property type="term" value="P:DNA recombination"/>
    <property type="evidence" value="ECO:0007669"/>
    <property type="project" value="UniProtKB-UniRule"/>
</dbReference>
<dbReference type="GO" id="GO:0000018">
    <property type="term" value="P:regulation of DNA recombination"/>
    <property type="evidence" value="ECO:0000318"/>
    <property type="project" value="GO_Central"/>
</dbReference>
<dbReference type="HAMAP" id="MF_00194">
    <property type="entry name" value="RdgC"/>
    <property type="match status" value="1"/>
</dbReference>
<dbReference type="InterPro" id="IPR007476">
    <property type="entry name" value="RdgC"/>
</dbReference>
<dbReference type="NCBIfam" id="NF001460">
    <property type="entry name" value="PRK00321.1-1"/>
    <property type="match status" value="1"/>
</dbReference>
<dbReference type="NCBIfam" id="NF001462">
    <property type="entry name" value="PRK00321.1-3"/>
    <property type="match status" value="1"/>
</dbReference>
<dbReference type="NCBIfam" id="NF001464">
    <property type="entry name" value="PRK00321.1-5"/>
    <property type="match status" value="1"/>
</dbReference>
<dbReference type="PANTHER" id="PTHR38103">
    <property type="entry name" value="RECOMBINATION-ASSOCIATED PROTEIN RDGC"/>
    <property type="match status" value="1"/>
</dbReference>
<dbReference type="PANTHER" id="PTHR38103:SF1">
    <property type="entry name" value="RECOMBINATION-ASSOCIATED PROTEIN RDGC"/>
    <property type="match status" value="1"/>
</dbReference>
<dbReference type="Pfam" id="PF04381">
    <property type="entry name" value="RdgC"/>
    <property type="match status" value="1"/>
</dbReference>
<reference key="1">
    <citation type="journal article" date="2001" name="Nature">
        <title>Complete genome sequence of Salmonella enterica serovar Typhimurium LT2.</title>
        <authorList>
            <person name="McClelland M."/>
            <person name="Sanderson K.E."/>
            <person name="Spieth J."/>
            <person name="Clifton S.W."/>
            <person name="Latreille P."/>
            <person name="Courtney L."/>
            <person name="Porwollik S."/>
            <person name="Ali J."/>
            <person name="Dante M."/>
            <person name="Du F."/>
            <person name="Hou S."/>
            <person name="Layman D."/>
            <person name="Leonard S."/>
            <person name="Nguyen C."/>
            <person name="Scott K."/>
            <person name="Holmes A."/>
            <person name="Grewal N."/>
            <person name="Mulvaney E."/>
            <person name="Ryan E."/>
            <person name="Sun H."/>
            <person name="Florea L."/>
            <person name="Miller W."/>
            <person name="Stoneking T."/>
            <person name="Nhan M."/>
            <person name="Waterston R."/>
            <person name="Wilson R.K."/>
        </authorList>
    </citation>
    <scope>NUCLEOTIDE SEQUENCE [LARGE SCALE GENOMIC DNA]</scope>
    <source>
        <strain>LT2 / SGSC1412 / ATCC 700720</strain>
    </source>
</reference>
<feature type="chain" id="PRO_0000211749" description="Recombination-associated protein RdgC">
    <location>
        <begin position="1"/>
        <end position="303"/>
    </location>
</feature>
<accession>P65973</accession>
<accession>Q8Z8Y8</accession>
<accession>Q8ZRE6</accession>
<sequence length="303" mass="33976">MLWFKNLMVYRLSRDITLRAEEMEKQLASMTFTPCGSQDMAKMGWVPPMGSHSDALTHTANGQIIICARKEEKILPSPVIKQALEAKIQKLEADQGRKLKKTEKDSLKDEVLHSLLPRAFSRFSQTMMWIDTVNGLIMVDCASAKKAEDTLALLRKSLGSLPVVPLALENPIELTLTEWVRSGTVAQGFQLLDEAELKAMLEDGGVIRAKKQDLVSDEIAVHIEAGKVVTKLALDWQQRIQFVMCDDGSIKRLKFCDELRDQNEDIDREDFAQRFDADFILMTGELAALIQSLVEGLGGEAQR</sequence>